<sequence>MTKQYMTHRCLIAPPEMADDFFANTVIYLARHDEEGAQGIIINRPAGIQIKELLNDLDIDADNVNPHEVLQGGPLRPEAGFVLHTGQPTWHSSIAVGENVCITTSKDILDAIAHNEGVGRYQIALGYASWGKNQLEDEIARGDWLICDADMDLIFNLPYDDRWDAAYKKIGVDRTWLASEIGHA</sequence>
<dbReference type="EMBL" id="CU468230">
    <property type="protein sequence ID" value="CAP02475.1"/>
    <property type="molecule type" value="Genomic_DNA"/>
</dbReference>
<dbReference type="SMR" id="B0VLV9"/>
<dbReference type="KEGG" id="abm:ABSDF3201"/>
<dbReference type="HOGENOM" id="CLU_057596_1_0_6"/>
<dbReference type="BioCyc" id="ABAU509170:GCL9-2650-MONOMER"/>
<dbReference type="Proteomes" id="UP000001741">
    <property type="component" value="Chromosome"/>
</dbReference>
<dbReference type="GO" id="GO:0005829">
    <property type="term" value="C:cytosol"/>
    <property type="evidence" value="ECO:0007669"/>
    <property type="project" value="TreeGrafter"/>
</dbReference>
<dbReference type="Gene3D" id="3.40.1740.10">
    <property type="entry name" value="VC0467-like"/>
    <property type="match status" value="1"/>
</dbReference>
<dbReference type="HAMAP" id="MF_00758">
    <property type="entry name" value="UPF0301"/>
    <property type="match status" value="1"/>
</dbReference>
<dbReference type="InterPro" id="IPR003774">
    <property type="entry name" value="AlgH-like"/>
</dbReference>
<dbReference type="NCBIfam" id="NF001266">
    <property type="entry name" value="PRK00228.1-1"/>
    <property type="match status" value="1"/>
</dbReference>
<dbReference type="PANTHER" id="PTHR30327">
    <property type="entry name" value="UNCHARACTERIZED PROTEIN YQGE"/>
    <property type="match status" value="1"/>
</dbReference>
<dbReference type="PANTHER" id="PTHR30327:SF1">
    <property type="entry name" value="UPF0301 PROTEIN YQGE"/>
    <property type="match status" value="1"/>
</dbReference>
<dbReference type="Pfam" id="PF02622">
    <property type="entry name" value="DUF179"/>
    <property type="match status" value="1"/>
</dbReference>
<dbReference type="SUPFAM" id="SSF143456">
    <property type="entry name" value="VC0467-like"/>
    <property type="match status" value="1"/>
</dbReference>
<organism>
    <name type="scientific">Acinetobacter baumannii (strain SDF)</name>
    <dbReference type="NCBI Taxonomy" id="509170"/>
    <lineage>
        <taxon>Bacteria</taxon>
        <taxon>Pseudomonadati</taxon>
        <taxon>Pseudomonadota</taxon>
        <taxon>Gammaproteobacteria</taxon>
        <taxon>Moraxellales</taxon>
        <taxon>Moraxellaceae</taxon>
        <taxon>Acinetobacter</taxon>
        <taxon>Acinetobacter calcoaceticus/baumannii complex</taxon>
    </lineage>
</organism>
<comment type="similarity">
    <text evidence="1">Belongs to the UPF0301 (AlgH) family.</text>
</comment>
<feature type="chain" id="PRO_1000198248" description="UPF0301 protein ABSDF3201">
    <location>
        <begin position="1"/>
        <end position="184"/>
    </location>
</feature>
<reference key="1">
    <citation type="journal article" date="2008" name="PLoS ONE">
        <title>Comparative analysis of Acinetobacters: three genomes for three lifestyles.</title>
        <authorList>
            <person name="Vallenet D."/>
            <person name="Nordmann P."/>
            <person name="Barbe V."/>
            <person name="Poirel L."/>
            <person name="Mangenot S."/>
            <person name="Bataille E."/>
            <person name="Dossat C."/>
            <person name="Gas S."/>
            <person name="Kreimeyer A."/>
            <person name="Lenoble P."/>
            <person name="Oztas S."/>
            <person name="Poulain J."/>
            <person name="Segurens B."/>
            <person name="Robert C."/>
            <person name="Abergel C."/>
            <person name="Claverie J.-M."/>
            <person name="Raoult D."/>
            <person name="Medigue C."/>
            <person name="Weissenbach J."/>
            <person name="Cruveiller S."/>
        </authorList>
    </citation>
    <scope>NUCLEOTIDE SEQUENCE [LARGE SCALE GENOMIC DNA]</scope>
    <source>
        <strain>SDF</strain>
    </source>
</reference>
<evidence type="ECO:0000255" key="1">
    <source>
        <dbReference type="HAMAP-Rule" id="MF_00758"/>
    </source>
</evidence>
<protein>
    <recommendedName>
        <fullName evidence="1">UPF0301 protein ABSDF3201</fullName>
    </recommendedName>
</protein>
<gene>
    <name type="ordered locus">ABSDF3201</name>
</gene>
<name>Y3201_ACIBS</name>
<accession>B0VLV9</accession>
<proteinExistence type="inferred from homology"/>